<dbReference type="EC" id="3.6.1.15" evidence="4"/>
<dbReference type="EC" id="2.7.7.48" evidence="12"/>
<dbReference type="EC" id="3.4.22.66" evidence="6"/>
<dbReference type="EMBL" id="X86560">
    <property type="protein sequence ID" value="CAA60262.1"/>
    <property type="molecule type" value="Genomic_RNA"/>
</dbReference>
<dbReference type="PDB" id="2CKW">
    <property type="method" value="X-ray"/>
    <property type="resolution" value="2.30 A"/>
    <property type="chains" value="A=1207-1721"/>
</dbReference>
<dbReference type="PDB" id="2UUT">
    <property type="method" value="X-ray"/>
    <property type="resolution" value="2.40 A"/>
    <property type="chains" value="A=1207-1721"/>
</dbReference>
<dbReference type="PDB" id="2UUW">
    <property type="method" value="X-ray"/>
    <property type="resolution" value="2.76 A"/>
    <property type="chains" value="A=1207-1721"/>
</dbReference>
<dbReference type="PDB" id="2WK4">
    <property type="method" value="X-ray"/>
    <property type="resolution" value="2.98 A"/>
    <property type="chains" value="A/B=1207-1721"/>
</dbReference>
<dbReference type="PDBsum" id="2CKW"/>
<dbReference type="PDBsum" id="2UUT"/>
<dbReference type="PDBsum" id="2UUW"/>
<dbReference type="PDBsum" id="2WK4"/>
<dbReference type="SMR" id="Q69014"/>
<dbReference type="MEROPS" id="C24.003"/>
<dbReference type="EvolutionaryTrace" id="Q69014"/>
<dbReference type="Proteomes" id="UP000113838">
    <property type="component" value="Genome"/>
</dbReference>
<dbReference type="GO" id="GO:0030430">
    <property type="term" value="C:host cell cytoplasm"/>
    <property type="evidence" value="ECO:0007669"/>
    <property type="project" value="UniProtKB-SubCell"/>
</dbReference>
<dbReference type="GO" id="GO:0019028">
    <property type="term" value="C:viral capsid"/>
    <property type="evidence" value="ECO:0007669"/>
    <property type="project" value="UniProtKB-KW"/>
</dbReference>
<dbReference type="GO" id="GO:0005524">
    <property type="term" value="F:ATP binding"/>
    <property type="evidence" value="ECO:0007669"/>
    <property type="project" value="UniProtKB-KW"/>
</dbReference>
<dbReference type="GO" id="GO:0004197">
    <property type="term" value="F:cysteine-type endopeptidase activity"/>
    <property type="evidence" value="ECO:0007669"/>
    <property type="project" value="InterPro"/>
</dbReference>
<dbReference type="GO" id="GO:0017111">
    <property type="term" value="F:ribonucleoside triphosphate phosphatase activity"/>
    <property type="evidence" value="ECO:0007669"/>
    <property type="project" value="UniProtKB-EC"/>
</dbReference>
<dbReference type="GO" id="GO:0003723">
    <property type="term" value="F:RNA binding"/>
    <property type="evidence" value="ECO:0007669"/>
    <property type="project" value="InterPro"/>
</dbReference>
<dbReference type="GO" id="GO:0003724">
    <property type="term" value="F:RNA helicase activity"/>
    <property type="evidence" value="ECO:0007669"/>
    <property type="project" value="InterPro"/>
</dbReference>
<dbReference type="GO" id="GO:0003968">
    <property type="term" value="F:RNA-directed RNA polymerase activity"/>
    <property type="evidence" value="ECO:0007669"/>
    <property type="project" value="UniProtKB-KW"/>
</dbReference>
<dbReference type="GO" id="GO:0006260">
    <property type="term" value="P:DNA replication"/>
    <property type="evidence" value="ECO:0007669"/>
    <property type="project" value="UniProtKB-KW"/>
</dbReference>
<dbReference type="GO" id="GO:0006351">
    <property type="term" value="P:DNA-templated transcription"/>
    <property type="evidence" value="ECO:0007669"/>
    <property type="project" value="InterPro"/>
</dbReference>
<dbReference type="GO" id="GO:0006508">
    <property type="term" value="P:proteolysis"/>
    <property type="evidence" value="ECO:0007669"/>
    <property type="project" value="UniProtKB-KW"/>
</dbReference>
<dbReference type="GO" id="GO:0039694">
    <property type="term" value="P:viral RNA genome replication"/>
    <property type="evidence" value="ECO:0007669"/>
    <property type="project" value="InterPro"/>
</dbReference>
<dbReference type="CDD" id="cd23192">
    <property type="entry name" value="Caliciviridae_RdRp"/>
    <property type="match status" value="1"/>
</dbReference>
<dbReference type="CDD" id="cd00205">
    <property type="entry name" value="rhv_like"/>
    <property type="match status" value="1"/>
</dbReference>
<dbReference type="Gene3D" id="1.10.260.110">
    <property type="match status" value="1"/>
</dbReference>
<dbReference type="Gene3D" id="1.20.960.20">
    <property type="match status" value="1"/>
</dbReference>
<dbReference type="Gene3D" id="2.60.120.20">
    <property type="match status" value="1"/>
</dbReference>
<dbReference type="Gene3D" id="3.30.70.270">
    <property type="match status" value="2"/>
</dbReference>
<dbReference type="Gene3D" id="6.10.250.3230">
    <property type="match status" value="1"/>
</dbReference>
<dbReference type="Gene3D" id="3.40.50.300">
    <property type="entry name" value="P-loop containing nucleotide triphosphate hydrolases"/>
    <property type="match status" value="1"/>
</dbReference>
<dbReference type="InterPro" id="IPR004005">
    <property type="entry name" value="Calicivirus_coat"/>
</dbReference>
<dbReference type="InterPro" id="IPR043502">
    <property type="entry name" value="DNA/RNA_pol_sf"/>
</dbReference>
<dbReference type="InterPro" id="IPR004004">
    <property type="entry name" value="Helic/Pol/Pept_Calicivir-typ"/>
</dbReference>
<dbReference type="InterPro" id="IPR000605">
    <property type="entry name" value="Helicase_SF3_ssDNA/RNA_vir"/>
</dbReference>
<dbReference type="InterPro" id="IPR014759">
    <property type="entry name" value="Helicase_SF3_ssRNA_vir"/>
</dbReference>
<dbReference type="InterPro" id="IPR001665">
    <property type="entry name" value="Norovirus_pept_C37"/>
</dbReference>
<dbReference type="InterPro" id="IPR027417">
    <property type="entry name" value="P-loop_NTPase"/>
</dbReference>
<dbReference type="InterPro" id="IPR000317">
    <property type="entry name" value="Peptidase_C24"/>
</dbReference>
<dbReference type="InterPro" id="IPR009003">
    <property type="entry name" value="Peptidase_S1_PA"/>
</dbReference>
<dbReference type="InterPro" id="IPR043128">
    <property type="entry name" value="Rev_trsase/Diguanyl_cyclase"/>
</dbReference>
<dbReference type="InterPro" id="IPR033703">
    <property type="entry name" value="Rhv-like"/>
</dbReference>
<dbReference type="InterPro" id="IPR001205">
    <property type="entry name" value="RNA-dir_pol_C"/>
</dbReference>
<dbReference type="InterPro" id="IPR007094">
    <property type="entry name" value="RNA-dir_pol_PSvirus"/>
</dbReference>
<dbReference type="InterPro" id="IPR029053">
    <property type="entry name" value="Viral_coat"/>
</dbReference>
<dbReference type="InterPro" id="IPR049434">
    <property type="entry name" value="VPg"/>
</dbReference>
<dbReference type="Pfam" id="PF00915">
    <property type="entry name" value="Calici_coat"/>
    <property type="match status" value="1"/>
</dbReference>
<dbReference type="Pfam" id="PF03510">
    <property type="entry name" value="Peptidase_C24"/>
    <property type="match status" value="1"/>
</dbReference>
<dbReference type="Pfam" id="PF05416">
    <property type="entry name" value="Peptidase_C37"/>
    <property type="match status" value="1"/>
</dbReference>
<dbReference type="Pfam" id="PF00680">
    <property type="entry name" value="RdRP_1"/>
    <property type="match status" value="1"/>
</dbReference>
<dbReference type="Pfam" id="PF00910">
    <property type="entry name" value="RNA_helicase"/>
    <property type="match status" value="1"/>
</dbReference>
<dbReference type="Pfam" id="PF20915">
    <property type="entry name" value="VPg"/>
    <property type="match status" value="1"/>
</dbReference>
<dbReference type="PRINTS" id="PR00916">
    <property type="entry name" value="2CENDOPTASE"/>
</dbReference>
<dbReference type="PRINTS" id="PR00918">
    <property type="entry name" value="CALICVIRUSNS"/>
</dbReference>
<dbReference type="SUPFAM" id="SSF56672">
    <property type="entry name" value="DNA/RNA polymerases"/>
    <property type="match status" value="1"/>
</dbReference>
<dbReference type="SUPFAM" id="SSF52540">
    <property type="entry name" value="P-loop containing nucleoside triphosphate hydrolases"/>
    <property type="match status" value="1"/>
</dbReference>
<dbReference type="SUPFAM" id="SSF88633">
    <property type="entry name" value="Positive stranded ssRNA viruses"/>
    <property type="match status" value="1"/>
</dbReference>
<dbReference type="SUPFAM" id="SSF50494">
    <property type="entry name" value="Trypsin-like serine proteases"/>
    <property type="match status" value="1"/>
</dbReference>
<dbReference type="PROSITE" id="PS51894">
    <property type="entry name" value="CV_3CL_PRO"/>
    <property type="match status" value="1"/>
</dbReference>
<dbReference type="PROSITE" id="PS50507">
    <property type="entry name" value="RDRP_SSRNA_POS"/>
    <property type="match status" value="1"/>
</dbReference>
<dbReference type="PROSITE" id="PS51218">
    <property type="entry name" value="SF3_HELICASE_2"/>
    <property type="match status" value="1"/>
</dbReference>
<organismHost>
    <name type="scientific">Homo sapiens</name>
    <name type="common">Human</name>
    <dbReference type="NCBI Taxonomy" id="9606"/>
</organismHost>
<sequence length="2280" mass="251349">MVSKPFKPIVLNATFEWQVFKRCYLRVAPREAFCENLSELHHYFARRVNAWLKHATRTLPDEYTFVEEGLLDMFGTKAPDSVQEGTLFRELFGVDQTEQFPLSLADLARLQGELVDATRTPGHALRQKYTMTTIQDLINKITKVVPVQATLNEMHARRQFERERADLFHELPLVDEDAVAQPKTYFYTMWRQVVKKGKAYFCPLVKTSAWRTKISAITEPIKDFLIAFWQAVQQEMGVNPQYLQLAWLQKLKPTTLTIILQQHKHTVSGWLATMTALVEVYSNLFDDLRKSSVTIVSSIGAFFDICKDFVSQVVELVKTTFTAQGPTDLGWAAVLAGAAMILLKMSGCPGVIGMWTKVLKICGGITTITAAARGVRWLKDLYEEAEGRRLPKMYMARGAALIELAASREVTGVDELKGLLDCFTILIEEGTELIHKFGTSPLAGLVRTYVSELETQANNIRSTIKLDTPRRVPVVIILTGAPGIGKTRLAQYIGQRFGKTSNFSVAVDHHDGYTGNTVCIWDEFDVDSKGAFVETMIGIANTAPFPLNCDRVENKGRVFTSDYVICTSNYPTSVIPDNPRAAAFYRRVLTVDVSAPDLEEWKKRNPGKRPTPDLYQDDFSHLKLMLRPYLGYNPDGDTLEGPRVAPTQISIAGLITLMERRFKEQAGPLQNLWLQVPKTLVEQSTNMVKAFMYANRAVCDVIPNPATRDITETALSKVFVCGTAPPPEFVGKHIVITGIEVGDASIANSLLSMFTTTTRLSAAAQREYMYRVWSPLIHIQDRSMNTQNLPYINRVIPVTSHWDFLRGLRHHLGFTSIPGMWKAFQGWRTSQGIVDFVAHHMADVTFPSNPECTIFRTPDADVVFYTFGSYVCFATPARVPYVGTPPTTIHSNTPRCMTWGETLALLCEVVAEFVLHFGPVILSAANIAYLMTRGSRTEEAKGKTKHGRGMRHGHRAGVSLSDDEYDEWRDLMRDWRRDMSVNDFLMLRERSALGMDDEDVARYRAWLEIRAMRMAGGAYTHATIIGRGGVRDEIIRTSPRRAPTRPQQHYEEEGPTAIVEFTQGGDHIGYGVHIGNGNVITVTHVASTSDEVNGSAFKITRTVGETTWVQGPFSQLPHMQIGSGSPVYFTTRLHPVFTISEGTFETPNITVNGFHVRIMNGYPTKKGDCGLPYFNSNRQLVALHAGTDTQGETKVAQRVVKEVTTQDEFQWKGLPVVKSGLDVGGMPTGTRYHRSPAWPEEQPGETHAPAPFGSGDKRYTFSQTEMLVNGLKPYTEPTAGVPPQLLSRAVTHVRSYIETIIGTHRSPVLTYHQACELLERTTSCGPFVQGLKGDYWDEEQQQYTGVLANHLEQAWDKANKGIAPRNAYKLALKDELRPIEKNKAGKRRLLWGCDAATTLIATAAFKAVATRLQVVTPMTPVAVGINMDSVQMQVMNDSLKGGVLYCLDYSKWDSTQNPAVTAASLAILERFAEPHPIVSCAIEALSSPAEGYVNDIKFVTRGGLPSGMPFTSVVNSINHMIYVAAAILQAYESHNVPYTGNVFQVETIHTYGDDCMYSVCPATASIFHTVLANLTSYGLKPTAADKSDAIKPTNTPVFLKRTFTQTPHGIRALLDITSITRQFYWLKANRTSDPSSPPAFDRQARSAQLENALAYASQHGPVMFDTVRQIAIKTAQGEGLVLVNTNYDQALATYNAWFIGGTVPDPVGHTEGTHKIVFEMEGNGSNPEPKQSNNPMVVDPPGTTGPTTSHVVVANPEQPNGAAQRLELAVATGAIQSNVPEAIRNCFAVFRTFAWNDRMPTGTFLGSISLHPNINPYTSHLSGMWAGWGGSFEVRLSISGSGVFAGRIIASVIPPGVDPSSIRDPGVLPHAFVDARITEPVSFMIPDVRAVDYHRMDGAEPTCSLGFWVYQPLLNPFSTTAVSTCWVSVETKPGGDFDFCLLRPPGQQMENGVSPEGLLPRRLGYSRGNRVGGLVVGMILVAEHKQVNRHFNSNSVTFGWSTAPVNPMAAEIVTNQAHSTSRHAWLSIGAQNKGPLFPGIPNHFPDSCASTVVGAMDTSLGGRPSTGVCGPAISFQNNGDVYENDTPSVMFATYDPLTSGTGVALTNSINPASLALVRISNNDFDTSGFANDKNVVVQMSWEMYTGTNQIRGQVTPMSGTNYTFTSTGANTLVLWQERMLSYDGHQAILYSSQLERTAEYFQNDIVNIPENSMAVFNVETNSASFQIGIRPDGYMVTGGSIGVNVPLEPETRFQYVGILPLSAALSGPSGNMGRARRVFQ</sequence>
<feature type="chain" id="PRO_0000341624" description="Genome polyprotein">
    <location>
        <begin position="1"/>
        <end position="2280"/>
    </location>
</feature>
<feature type="chain" id="PRO_0000460163" description="NS1">
    <location>
        <begin position="1"/>
        <end position="68"/>
    </location>
</feature>
<feature type="chain" id="PRO_0000036921" description="NS2">
    <location>
        <begin position="69"/>
        <end position="324"/>
    </location>
</feature>
<feature type="chain" id="PRO_0000036922" description="NTPase">
    <location>
        <begin position="325"/>
        <end position="665"/>
    </location>
</feature>
<feature type="chain" id="PRO_0000036923" description="NS4">
    <location>
        <begin position="666"/>
        <end position="939"/>
    </location>
</feature>
<feature type="chain" id="PRO_0000036924" description="Viral genome-linked protein">
    <location>
        <begin position="940"/>
        <end position="1053"/>
    </location>
</feature>
<feature type="chain" id="PRO_0000036926" description="Protease-polymerase p70">
    <location>
        <begin position="1054"/>
        <end position="1721"/>
    </location>
</feature>
<feature type="chain" id="PRO_0000036927" description="Capsid protein" evidence="1">
    <location>
        <begin position="1722"/>
        <end position="2280"/>
    </location>
</feature>
<feature type="domain" description="SF3 helicase" evidence="9">
    <location>
        <begin position="454"/>
        <end position="608"/>
    </location>
</feature>
<feature type="domain" description="Peptidase C24" evidence="10">
    <location>
        <begin position="1054"/>
        <end position="1202"/>
    </location>
</feature>
<feature type="domain" description="RdRp catalytic" evidence="8">
    <location>
        <begin position="1442"/>
        <end position="1567"/>
    </location>
</feature>
<feature type="region of interest" description="Disordered" evidence="11">
    <location>
        <begin position="1722"/>
        <end position="1746"/>
    </location>
</feature>
<feature type="compositionally biased region" description="Polar residues" evidence="11">
    <location>
        <begin position="1723"/>
        <end position="1735"/>
    </location>
</feature>
<feature type="active site" description="For 3CLpro activity" evidence="10">
    <location>
        <position position="1084"/>
    </location>
</feature>
<feature type="active site" description="For 3CLpro activity" evidence="10">
    <location>
        <position position="1105"/>
    </location>
</feature>
<feature type="active site" description="For 3CLpro activity" evidence="10">
    <location>
        <position position="1169"/>
    </location>
</feature>
<feature type="binding site" evidence="9">
    <location>
        <begin position="480"/>
        <end position="487"/>
    </location>
    <ligand>
        <name>ATP</name>
        <dbReference type="ChEBI" id="CHEBI:30616"/>
    </ligand>
</feature>
<feature type="site" description="Cleavage; by Pro-Pol" evidence="6">
    <location>
        <begin position="68"/>
        <end position="69"/>
    </location>
</feature>
<feature type="site" description="Cleavage; by Pro-Pol" evidence="6">
    <location>
        <begin position="324"/>
        <end position="325"/>
    </location>
</feature>
<feature type="site" description="Cleavage; by Pro-Pol" evidence="6">
    <location>
        <begin position="665"/>
        <end position="666"/>
    </location>
</feature>
<feature type="site" description="Cleavage; by Pro-Pol" evidence="6">
    <location>
        <begin position="939"/>
        <end position="940"/>
    </location>
</feature>
<feature type="site" description="Cleavage; by Pro-Pol" evidence="6">
    <location>
        <begin position="1053"/>
        <end position="1054"/>
    </location>
</feature>
<feature type="site" description="Cleavage; by Pro-Pol" evidence="6">
    <location>
        <begin position="1721"/>
        <end position="1722"/>
    </location>
</feature>
<feature type="modified residue" description="O-(5'-phospho-RNA)-tyrosine" evidence="2">
    <location>
        <position position="965"/>
    </location>
</feature>
<feature type="splice variant" id="VSP_034384" description="In isoform Subgenomic capsid protein." evidence="13">
    <location>
        <begin position="1"/>
        <end position="1719"/>
    </location>
</feature>
<feature type="strand" evidence="15">
    <location>
        <begin position="1209"/>
        <end position="1211"/>
    </location>
</feature>
<feature type="strand" evidence="15">
    <location>
        <begin position="1214"/>
        <end position="1218"/>
    </location>
</feature>
<feature type="strand" evidence="15">
    <location>
        <begin position="1229"/>
        <end position="1234"/>
    </location>
</feature>
<feature type="strand" evidence="15">
    <location>
        <begin position="1247"/>
        <end position="1249"/>
    </location>
</feature>
<feature type="helix" evidence="15">
    <location>
        <begin position="1253"/>
        <end position="1255"/>
    </location>
</feature>
<feature type="turn" evidence="17">
    <location>
        <begin position="1257"/>
        <end position="1259"/>
    </location>
</feature>
<feature type="helix" evidence="15">
    <location>
        <begin position="1263"/>
        <end position="1271"/>
    </location>
</feature>
<feature type="helix" evidence="15">
    <location>
        <begin position="1272"/>
        <end position="1275"/>
    </location>
</feature>
<feature type="helix" evidence="15">
    <location>
        <begin position="1283"/>
        <end position="1301"/>
    </location>
</feature>
<feature type="helix" evidence="15">
    <location>
        <begin position="1311"/>
        <end position="1317"/>
    </location>
</feature>
<feature type="strand" evidence="17">
    <location>
        <begin position="1320"/>
        <end position="1323"/>
    </location>
</feature>
<feature type="strand" evidence="15">
    <location>
        <begin position="1326"/>
        <end position="1328"/>
    </location>
</feature>
<feature type="helix" evidence="15">
    <location>
        <begin position="1332"/>
        <end position="1335"/>
    </location>
</feature>
<feature type="turn" evidence="15">
    <location>
        <begin position="1338"/>
        <end position="1340"/>
    </location>
</feature>
<feature type="helix" evidence="15">
    <location>
        <begin position="1345"/>
        <end position="1359"/>
    </location>
</feature>
<feature type="strand" evidence="15">
    <location>
        <begin position="1367"/>
        <end position="1372"/>
    </location>
</feature>
<feature type="strand" evidence="15">
    <location>
        <begin position="1375"/>
        <end position="1378"/>
    </location>
</feature>
<feature type="helix" evidence="15">
    <location>
        <begin position="1379"/>
        <end position="1383"/>
    </location>
</feature>
<feature type="strand" evidence="15">
    <location>
        <begin position="1389"/>
        <end position="1393"/>
    </location>
</feature>
<feature type="helix" evidence="15">
    <location>
        <begin position="1395"/>
        <end position="1413"/>
    </location>
</feature>
<feature type="turn" evidence="15">
    <location>
        <begin position="1414"/>
        <end position="1417"/>
    </location>
</feature>
<feature type="strand" evidence="15">
    <location>
        <begin position="1418"/>
        <end position="1421"/>
    </location>
</feature>
<feature type="helix" evidence="15">
    <location>
        <begin position="1430"/>
        <end position="1437"/>
    </location>
</feature>
<feature type="turn" evidence="15">
    <location>
        <begin position="1438"/>
        <end position="1441"/>
    </location>
</feature>
<feature type="strand" evidence="15">
    <location>
        <begin position="1442"/>
        <end position="1445"/>
    </location>
</feature>
<feature type="turn" evidence="17">
    <location>
        <begin position="1450"/>
        <end position="1452"/>
    </location>
</feature>
<feature type="helix" evidence="15">
    <location>
        <begin position="1453"/>
        <end position="1455"/>
    </location>
</feature>
<feature type="helix" evidence="15">
    <location>
        <begin position="1458"/>
        <end position="1469"/>
    </location>
</feature>
<feature type="helix" evidence="15">
    <location>
        <begin position="1477"/>
        <end position="1486"/>
    </location>
</feature>
<feature type="strand" evidence="15">
    <location>
        <begin position="1490"/>
        <end position="1493"/>
    </location>
</feature>
<feature type="strand" evidence="15">
    <location>
        <begin position="1496"/>
        <end position="1499"/>
    </location>
</feature>
<feature type="strand" evidence="15">
    <location>
        <begin position="1501"/>
        <end position="1503"/>
    </location>
</feature>
<feature type="helix" evidence="15">
    <location>
        <begin position="1511"/>
        <end position="1533"/>
    </location>
</feature>
<feature type="helix" evidence="15">
    <location>
        <begin position="1542"/>
        <end position="1545"/>
    </location>
</feature>
<feature type="strand" evidence="15">
    <location>
        <begin position="1546"/>
        <end position="1551"/>
    </location>
</feature>
<feature type="strand" evidence="15">
    <location>
        <begin position="1554"/>
        <end position="1559"/>
    </location>
</feature>
<feature type="helix" evidence="15">
    <location>
        <begin position="1561"/>
        <end position="1565"/>
    </location>
</feature>
<feature type="helix" evidence="15">
    <location>
        <begin position="1567"/>
        <end position="1576"/>
    </location>
</feature>
<feature type="strand" evidence="18">
    <location>
        <begin position="1583"/>
        <end position="1585"/>
    </location>
</feature>
<feature type="strand" evidence="16">
    <location>
        <begin position="1593"/>
        <end position="1595"/>
    </location>
</feature>
<feature type="strand" evidence="15">
    <location>
        <begin position="1601"/>
        <end position="1606"/>
    </location>
</feature>
<feature type="strand" evidence="15">
    <location>
        <begin position="1609"/>
        <end position="1614"/>
    </location>
</feature>
<feature type="helix" evidence="15">
    <location>
        <begin position="1616"/>
        <end position="1624"/>
    </location>
</feature>
<feature type="strand" evidence="15">
    <location>
        <begin position="1625"/>
        <end position="1632"/>
    </location>
</feature>
<feature type="helix" evidence="15">
    <location>
        <begin position="1642"/>
        <end position="1657"/>
    </location>
</feature>
<feature type="helix" evidence="15">
    <location>
        <begin position="1661"/>
        <end position="1678"/>
    </location>
</feature>
<feature type="helix" evidence="15">
    <location>
        <begin position="1687"/>
        <end position="1700"/>
    </location>
</feature>
<reference key="1">
    <citation type="journal article" date="1995" name="Arch. Virol.">
        <title>Human enteric caliciviruses have a unique genome structure and are distinct from the Norwalk-like viruses.</title>
        <authorList>
            <person name="Liu B.L."/>
            <person name="Clarke I.N."/>
            <person name="Caul E.O."/>
            <person name="Lambden P.R."/>
        </authorList>
    </citation>
    <scope>NUCLEOTIDE SEQUENCE [GENOMIC RNA]</scope>
</reference>
<reference key="2">
    <citation type="submission" date="1997-09" db="EMBL/GenBank/DDBJ databases">
        <authorList>
            <person name="Lambden P.R."/>
        </authorList>
    </citation>
    <scope>SEQUENCE REVISION TO 1-72</scope>
</reference>
<reference evidence="14" key="3">
    <citation type="journal article" date="2007" name="J. Virol.">
        <title>Structural and functional characterization of sapovirus RNA-dependent RNA polymerase.</title>
        <authorList>
            <person name="Fullerton S.W."/>
            <person name="Blaschke M."/>
            <person name="Coutard B."/>
            <person name="Gebhardt J."/>
            <person name="Gorbalenya A."/>
            <person name="Canard B."/>
            <person name="Tucker P.A."/>
            <person name="Rohayem J."/>
        </authorList>
    </citation>
    <scope>X-RAY CRYSTALLOGRAPHY (2.3 ANGSTROMS) OF 1207-1721</scope>
    <scope>CATALYTIC ACTIVITY (PROTEASE-POLYMERASE P70)</scope>
</reference>
<keyword id="KW-0002">3D-structure</keyword>
<keyword id="KW-0024">Alternative initiation</keyword>
<keyword id="KW-0877">Alternative promoter usage</keyword>
<keyword id="KW-0067">ATP-binding</keyword>
<keyword id="KW-0167">Capsid protein</keyword>
<keyword id="KW-0191">Covalent protein-RNA linkage</keyword>
<keyword id="KW-0235">DNA replication</keyword>
<keyword id="KW-1035">Host cytoplasm</keyword>
<keyword id="KW-0378">Hydrolase</keyword>
<keyword id="KW-0547">Nucleotide-binding</keyword>
<keyword id="KW-0548">Nucleotidyltransferase</keyword>
<keyword id="KW-0597">Phosphoprotein</keyword>
<keyword id="KW-0645">Protease</keyword>
<keyword id="KW-0696">RNA-directed RNA polymerase</keyword>
<keyword id="KW-0788">Thiol protease</keyword>
<keyword id="KW-0808">Transferase</keyword>
<keyword id="KW-0693">Viral RNA replication</keyword>
<keyword id="KW-0946">Virion</keyword>
<proteinExistence type="evidence at protein level"/>
<protein>
    <recommendedName>
        <fullName>Genome polyprotein</fullName>
    </recommendedName>
    <component>
        <recommendedName>
            <fullName>NS1</fullName>
        </recommendedName>
        <alternativeName>
            <fullName>Protein p11</fullName>
        </alternativeName>
    </component>
    <component>
        <recommendedName>
            <fullName>NS2</fullName>
        </recommendedName>
        <alternativeName>
            <fullName>Protein p28</fullName>
        </alternativeName>
    </component>
    <component>
        <recommendedName>
            <fullName>NTPase</fullName>
            <ecNumber evidence="4">3.6.1.15</ecNumber>
        </recommendedName>
        <alternativeName>
            <fullName>NS3</fullName>
        </alternativeName>
        <alternativeName>
            <fullName>p35</fullName>
        </alternativeName>
    </component>
    <component>
        <recommendedName>
            <fullName>NS4</fullName>
        </recommendedName>
        <alternativeName>
            <fullName>Protein p32</fullName>
        </alternativeName>
    </component>
    <component>
        <recommendedName>
            <fullName>Viral genome-linked protein</fullName>
            <shortName>VPg</shortName>
        </recommendedName>
        <alternativeName>
            <fullName>NS5</fullName>
        </alternativeName>
        <alternativeName>
            <fullName>p14</fullName>
        </alternativeName>
    </component>
    <component>
        <recommendedName>
            <fullName>Protease-polymerase p70</fullName>
            <shortName>Pro-Pol</shortName>
            <ecNumber evidence="12">2.7.7.48</ecNumber>
            <ecNumber evidence="6">3.4.22.66</ecNumber>
        </recommendedName>
        <alternativeName>
            <fullName>NS6-7</fullName>
        </alternativeName>
    </component>
    <component>
        <recommendedName>
            <fullName>Capsid protein</fullName>
            <shortName>CP</shortName>
        </recommendedName>
        <alternativeName>
            <fullName>VP1</fullName>
        </alternativeName>
        <alternativeName>
            <fullName>p60</fullName>
        </alternativeName>
    </component>
</protein>
<organism>
    <name type="scientific">Sapporo virus (strain Human/United Kingdom/Manchester/1993)</name>
    <name type="common">Hu/SV/Man/1993/UK</name>
    <dbReference type="NCBI Taxonomy" id="82659"/>
    <lineage>
        <taxon>Viruses</taxon>
        <taxon>Riboviria</taxon>
        <taxon>Orthornavirae</taxon>
        <taxon>Pisuviricota</taxon>
        <taxon>Pisoniviricetes</taxon>
        <taxon>Picornavirales</taxon>
        <taxon>Caliciviridae</taxon>
        <taxon>Sapovirus</taxon>
        <taxon>Sapporo virus</taxon>
    </lineage>
</organism>
<name>POLG_SVM93</name>
<accession>Q69014</accession>
<comment type="function">
    <molecule>NS2</molecule>
    <text evidence="3 5">Together with NTPase and NS4, initiates the formation of the replication complex (By similarity). Induces the proliferation of the host smooth ER membranes forming long tubular structures (By similarity). These remodeled membranes probably form the viral factories that contain the replication complex (By similarity).</text>
</comment>
<comment type="function">
    <molecule>NTPase</molecule>
    <text evidence="3 4 5">Displays NTPase activity, but no helicase activity (By similarity). Induces the formation of convoluted membranes derived from the host ER (By similarity). These remodeled membranes probably form the viral factories that contain the replication complex (By similarity). Together with NS2 and NS4, initiates the formation of the replication complex (By similarity).</text>
</comment>
<comment type="function">
    <molecule>NS4</molecule>
    <text evidence="3 5">Probable key protein responsible for the formation of membrane alterations by the virus (By similarity). Induces the formation of convoluted membranes derived from the host ER (By similarity). These remodeled membranes probably form the viral factories that contain the replication complex (By similarity). Together with NS2 and NTPase, initiates the formation of the replication complex (By similarity).</text>
</comment>
<comment type="function">
    <molecule>Viral genome-linked protein</molecule>
    <text evidence="2">Viral genome-linked protein is covalently linked to the 5'-end of the positive-strand, negative-strand genomic RNAs and subgenomic RNA. Acts as a genome-linked replication primer. May recruit ribosome to viral RNA thereby promoting viral proteins translation. Interacts with host translation initiation complex to allow the translation of viral proteins.</text>
</comment>
<comment type="function">
    <molecule>Protease-polymerase p70</molecule>
    <text evidence="5">Protease-polymerase p76 processes the polyprotein: Pro-Pol is first released by autocleavage, then all other proteins are cleaved (By similarity). Cleaves host translation initiation factor eIF4G1, eIF4G2 and PABP1 thereby inducing a shutdown of host protein synthesis (By similarity). This shutdown may not prevent viral mRNA from being translated since viral Vpg replaces the cap (By similarity). It is also an RNA-directed RNA polymerase which replicates genomic and antigenomic viral RNA by recognizing specific signals (By similarity). Also transcribes a subgenomic mRNA by initiating RNA synthesis internally on antigenomic RNA (By similarity). This sgRNA codes for structural proteins. Catalyzes the covalent attachment VPg with viral RNAs (By similarity).</text>
</comment>
<comment type="function">
    <molecule>Capsid protein</molecule>
    <text evidence="1 7">Capsid protein self assembles to form an icosahedral capsid with a T=3 symmetry, about 38 nm in diameter, and consisting of 180 capsid proteins (By similarity). The capsid encapsulate the genomic RNA and VP2 proteins. Attaches virion to target cells, inducing endocytosis of the viral particle. Acidification of the endosome induces conformational change of capsid protein thereby injecting virus genomic RNA into host cytoplasm (By similarity).</text>
</comment>
<comment type="catalytic activity">
    <molecule>NTPase</molecule>
    <reaction evidence="4">
        <text>a ribonucleoside 5'-triphosphate + H2O = a ribonucleoside 5'-diphosphate + phosphate + H(+)</text>
        <dbReference type="Rhea" id="RHEA:23680"/>
        <dbReference type="ChEBI" id="CHEBI:15377"/>
        <dbReference type="ChEBI" id="CHEBI:15378"/>
        <dbReference type="ChEBI" id="CHEBI:43474"/>
        <dbReference type="ChEBI" id="CHEBI:57930"/>
        <dbReference type="ChEBI" id="CHEBI:61557"/>
        <dbReference type="EC" id="3.6.1.15"/>
    </reaction>
</comment>
<comment type="catalytic activity">
    <molecule>Protease-polymerase p70</molecule>
    <reaction evidence="8">
        <text>RNA(n) + a ribonucleoside 5'-triphosphate = RNA(n+1) + diphosphate</text>
        <dbReference type="Rhea" id="RHEA:21248"/>
        <dbReference type="Rhea" id="RHEA-COMP:14527"/>
        <dbReference type="Rhea" id="RHEA-COMP:17342"/>
        <dbReference type="ChEBI" id="CHEBI:33019"/>
        <dbReference type="ChEBI" id="CHEBI:61557"/>
        <dbReference type="ChEBI" id="CHEBI:140395"/>
        <dbReference type="EC" id="2.7.7.48"/>
    </reaction>
</comment>
<comment type="catalytic activity">
    <molecule>Protease-polymerase p70</molecule>
    <reaction evidence="10">
        <text>Endopeptidase with a preference for cleavage when the P1 position is occupied by Glu-|-Xaa and the P1' position is occupied by Gly-|-Yaa.</text>
        <dbReference type="EC" id="3.4.22.66"/>
    </reaction>
</comment>
<comment type="subunit">
    <molecule>Capsid protein</molecule>
    <text evidence="7">Homodimer. Homomultimer.</text>
</comment>
<comment type="subcellular location">
    <molecule>Capsid protein</molecule>
    <subcellularLocation>
        <location>Virion</location>
    </subcellularLocation>
    <subcellularLocation>
        <location>Host cytoplasm</location>
    </subcellularLocation>
</comment>
<comment type="alternative products">
    <event type="alternative promoter"/>
    <event type="alternative initiation"/>
    <isoform>
        <id>Q69014-1</id>
        <name>Genome polyprotein</name>
        <sequence type="displayed"/>
    </isoform>
    <isoform>
        <id>Q69014-2</id>
        <name>Subgenomic capsid protein</name>
        <name>VP1</name>
        <sequence type="described" ref="VSP_034384"/>
    </isoform>
    <isoform>
        <id>Q69015-1</id>
        <name>Uncharacterized protein VP3</name>
        <sequence type="external"/>
    </isoform>
</comment>
<comment type="domain">
    <molecule>Protease-polymerase p70</molecule>
    <text evidence="13">Protease-polymerase is composed of two domains displaying two different catalytic activity. These activities may act independently.</text>
</comment>
<comment type="PTM">
    <molecule>Genome polyprotein</molecule>
    <text evidence="5">Specific enzymatic cleavages in vivo yield mature proteins (By similarity). Pro-Pol is first autocatalytically cleaved, then processes the whole polyprotein (By similarity).</text>
</comment>
<comment type="PTM">
    <molecule>Viral genome-linked protein</molecule>
    <text evidence="5">VPg is uridylylated by the polymerase and is covalently attached to the 5'-end of the polyadenylated genomic and subgenomic RNAs. This uridylylated form acts as a nucleotide-peptide primer for the polymerase.</text>
</comment>
<comment type="miscellaneous">
    <text evidence="1">Two different RNAs lead the expression of the capsid protein. One arises from the cleavage of the polyprotein translated from the genomic RNA and the other from the translation of a subgenomic RNA derived from the (-)RNA template. Capsid protein expressed from the subgenomic mRNA is produced in much larger amounts than the cleaved one (By similarity).</text>
</comment>
<comment type="miscellaneous">
    <molecule>Isoform Genome polyprotein</molecule>
    <text>Produced from the genomic RNA.</text>
</comment>
<comment type="miscellaneous">
    <molecule>Isoform Subgenomic capsid protein</molecule>
    <text evidence="13">Produced from the subgenomic RNA by alternative promoter usage.</text>
</comment>
<comment type="caution">
    <text evidence="13">The N-terminal part of the polyprotein may be missing and the genome sequence may lack the 5'-end, since all other sapoviruses code for a supplemental N-terminal peptide.</text>
</comment>
<evidence type="ECO:0000250" key="1"/>
<evidence type="ECO:0000250" key="2">
    <source>
        <dbReference type="UniProtKB" id="P27409"/>
    </source>
</evidence>
<evidence type="ECO:0000250" key="3">
    <source>
        <dbReference type="UniProtKB" id="P54634"/>
    </source>
</evidence>
<evidence type="ECO:0000250" key="4">
    <source>
        <dbReference type="UniProtKB" id="Q04544"/>
    </source>
</evidence>
<evidence type="ECO:0000250" key="5">
    <source>
        <dbReference type="UniProtKB" id="Q66914"/>
    </source>
</evidence>
<evidence type="ECO:0000250" key="6">
    <source>
        <dbReference type="UniProtKB" id="Q6XDK8"/>
    </source>
</evidence>
<evidence type="ECO:0000250" key="7">
    <source>
        <dbReference type="UniProtKB" id="Q9QEJ5"/>
    </source>
</evidence>
<evidence type="ECO:0000255" key="8">
    <source>
        <dbReference type="PROSITE-ProRule" id="PRU00539"/>
    </source>
</evidence>
<evidence type="ECO:0000255" key="9">
    <source>
        <dbReference type="PROSITE-ProRule" id="PRU00551"/>
    </source>
</evidence>
<evidence type="ECO:0000255" key="10">
    <source>
        <dbReference type="PROSITE-ProRule" id="PRU01242"/>
    </source>
</evidence>
<evidence type="ECO:0000256" key="11">
    <source>
        <dbReference type="SAM" id="MobiDB-lite"/>
    </source>
</evidence>
<evidence type="ECO:0000269" key="12">
    <source>
    </source>
</evidence>
<evidence type="ECO:0000305" key="13"/>
<evidence type="ECO:0007744" key="14">
    <source>
        <dbReference type="PDB" id="2CKW"/>
    </source>
</evidence>
<evidence type="ECO:0007829" key="15">
    <source>
        <dbReference type="PDB" id="2CKW"/>
    </source>
</evidence>
<evidence type="ECO:0007829" key="16">
    <source>
        <dbReference type="PDB" id="2UUT"/>
    </source>
</evidence>
<evidence type="ECO:0007829" key="17">
    <source>
        <dbReference type="PDB" id="2UUW"/>
    </source>
</evidence>
<evidence type="ECO:0007829" key="18">
    <source>
        <dbReference type="PDB" id="2WK4"/>
    </source>
</evidence>
<gene>
    <name type="ORF">ORF1</name>
</gene>